<accession>Q1RGG3</accession>
<evidence type="ECO:0000255" key="1">
    <source>
        <dbReference type="HAMAP-Rule" id="MF_01525"/>
    </source>
</evidence>
<evidence type="ECO:0000256" key="2">
    <source>
        <dbReference type="SAM" id="MobiDB-lite"/>
    </source>
</evidence>
<evidence type="ECO:0000305" key="3"/>
<reference key="1">
    <citation type="journal article" date="2006" name="Proc. Natl. Acad. Sci. U.S.A.">
        <title>Identification of genes subject to positive selection in uropathogenic strains of Escherichia coli: a comparative genomics approach.</title>
        <authorList>
            <person name="Chen S.L."/>
            <person name="Hung C.-S."/>
            <person name="Xu J."/>
            <person name="Reigstad C.S."/>
            <person name="Magrini V."/>
            <person name="Sabo A."/>
            <person name="Blasiar D."/>
            <person name="Bieri T."/>
            <person name="Meyer R.R."/>
            <person name="Ozersky P."/>
            <person name="Armstrong J.R."/>
            <person name="Fulton R.S."/>
            <person name="Latreille J.P."/>
            <person name="Spieth J."/>
            <person name="Hooton T.M."/>
            <person name="Mardis E.R."/>
            <person name="Hultgren S.J."/>
            <person name="Gordon J.I."/>
        </authorList>
    </citation>
    <scope>NUCLEOTIDE SEQUENCE [LARGE SCALE GENOMIC DNA]</scope>
    <source>
        <strain>UTI89 / UPEC</strain>
    </source>
</reference>
<dbReference type="EMBL" id="CP000243">
    <property type="protein sequence ID" value="ABE05551.1"/>
    <property type="status" value="ALT_INIT"/>
    <property type="molecule type" value="Genomic_DNA"/>
</dbReference>
<dbReference type="RefSeq" id="WP_000122880.1">
    <property type="nucleotide sequence ID" value="NZ_CP064825.1"/>
</dbReference>
<dbReference type="SMR" id="Q1RGG3"/>
<dbReference type="KEGG" id="eci:UTI89_C0041"/>
<dbReference type="HOGENOM" id="CLU_064827_4_2_6"/>
<dbReference type="UniPathway" id="UPA00117"/>
<dbReference type="Proteomes" id="UP000001952">
    <property type="component" value="Chromosome"/>
</dbReference>
<dbReference type="GO" id="GO:0016740">
    <property type="term" value="F:transferase activity"/>
    <property type="evidence" value="ECO:0007669"/>
    <property type="project" value="UniProtKB-KW"/>
</dbReference>
<dbReference type="GO" id="GO:0009437">
    <property type="term" value="P:carnitine metabolic process"/>
    <property type="evidence" value="ECO:0007669"/>
    <property type="project" value="UniProtKB-UniRule"/>
</dbReference>
<dbReference type="CDD" id="cd04745">
    <property type="entry name" value="LbH_paaY_like"/>
    <property type="match status" value="1"/>
</dbReference>
<dbReference type="FunFam" id="2.160.10.10:FF:000012">
    <property type="entry name" value="Carnitine operon protein CaiE"/>
    <property type="match status" value="1"/>
</dbReference>
<dbReference type="Gene3D" id="2.160.10.10">
    <property type="entry name" value="Hexapeptide repeat proteins"/>
    <property type="match status" value="1"/>
</dbReference>
<dbReference type="HAMAP" id="MF_01525">
    <property type="entry name" value="CaiE"/>
    <property type="match status" value="1"/>
</dbReference>
<dbReference type="InterPro" id="IPR023446">
    <property type="entry name" value="CaiE"/>
</dbReference>
<dbReference type="InterPro" id="IPR001451">
    <property type="entry name" value="Hexapep"/>
</dbReference>
<dbReference type="InterPro" id="IPR050484">
    <property type="entry name" value="Transf_Hexapept/Carb_Anhydrase"/>
</dbReference>
<dbReference type="InterPro" id="IPR011004">
    <property type="entry name" value="Trimer_LpxA-like_sf"/>
</dbReference>
<dbReference type="NCBIfam" id="NF010150">
    <property type="entry name" value="PRK13627.1"/>
    <property type="match status" value="1"/>
</dbReference>
<dbReference type="PANTHER" id="PTHR13061">
    <property type="entry name" value="DYNACTIN SUBUNIT P25"/>
    <property type="match status" value="1"/>
</dbReference>
<dbReference type="PANTHER" id="PTHR13061:SF29">
    <property type="entry name" value="GAMMA CARBONIC ANHYDRASE-LIKE 1, MITOCHONDRIAL-RELATED"/>
    <property type="match status" value="1"/>
</dbReference>
<dbReference type="Pfam" id="PF00132">
    <property type="entry name" value="Hexapep"/>
    <property type="match status" value="1"/>
</dbReference>
<dbReference type="SUPFAM" id="SSF51161">
    <property type="entry name" value="Trimeric LpxA-like enzymes"/>
    <property type="match status" value="1"/>
</dbReference>
<keyword id="KW-0677">Repeat</keyword>
<keyword id="KW-0808">Transferase</keyword>
<proteinExistence type="inferred from homology"/>
<sequence>MSYYAFEGLIPVVHPTAFVHPSAVLIGDVIVGAGVYIGPLASLRGDYGRLIVQAGANIQDGCIMHGYCDTDTIVGENGHIGHGAILHGCVIGRDALVGMNSVIMDGAVIGEESIVAAMSFVKAGFRGEKRQLLMGTPARAVRSVSDDELHWKRLNTKEYQDLVGRCHAALHETQPLRQMEENRPRLQGTTDVTPKR</sequence>
<protein>
    <recommendedName>
        <fullName evidence="1">Carnitine operon protein CaiE</fullName>
    </recommendedName>
</protein>
<comment type="function">
    <text evidence="1">Overproduction of CaiE stimulates the activity of CaiB and CaiD.</text>
</comment>
<comment type="pathway">
    <text evidence="1">Amine and polyamine metabolism; carnitine metabolism.</text>
</comment>
<comment type="similarity">
    <text evidence="1">Belongs to the transferase hexapeptide repeat family.</text>
</comment>
<comment type="sequence caution" evidence="3">
    <conflict type="erroneous initiation">
        <sequence resource="EMBL-CDS" id="ABE05551"/>
    </conflict>
</comment>
<name>CAIE_ECOUT</name>
<organism>
    <name type="scientific">Escherichia coli (strain UTI89 / UPEC)</name>
    <dbReference type="NCBI Taxonomy" id="364106"/>
    <lineage>
        <taxon>Bacteria</taxon>
        <taxon>Pseudomonadati</taxon>
        <taxon>Pseudomonadota</taxon>
        <taxon>Gammaproteobacteria</taxon>
        <taxon>Enterobacterales</taxon>
        <taxon>Enterobacteriaceae</taxon>
        <taxon>Escherichia</taxon>
    </lineage>
</organism>
<feature type="chain" id="PRO_0000292723" description="Carnitine operon protein CaiE">
    <location>
        <begin position="1"/>
        <end position="196"/>
    </location>
</feature>
<feature type="region of interest" description="Disordered" evidence="2">
    <location>
        <begin position="173"/>
        <end position="196"/>
    </location>
</feature>
<feature type="compositionally biased region" description="Polar residues" evidence="2">
    <location>
        <begin position="187"/>
        <end position="196"/>
    </location>
</feature>
<gene>
    <name evidence="1" type="primary">caiE</name>
    <name type="ordered locus">UTI89_C0041</name>
</gene>